<gene>
    <name evidence="1" type="primary">rplN</name>
    <name type="ordered locus">MGAS9429_Spy0054</name>
</gene>
<name>RL14_STRPC</name>
<keyword id="KW-0687">Ribonucleoprotein</keyword>
<keyword id="KW-0689">Ribosomal protein</keyword>
<keyword id="KW-0694">RNA-binding</keyword>
<keyword id="KW-0699">rRNA-binding</keyword>
<comment type="function">
    <text evidence="1">Binds to 23S rRNA. Forms part of two intersubunit bridges in the 70S ribosome.</text>
</comment>
<comment type="subunit">
    <text evidence="1">Part of the 50S ribosomal subunit. Forms a cluster with proteins L3 and L19. In the 70S ribosome, L14 and L19 interact and together make contacts with the 16S rRNA in bridges B5 and B8.</text>
</comment>
<comment type="similarity">
    <text evidence="1">Belongs to the universal ribosomal protein uL14 family.</text>
</comment>
<accession>Q1JP07</accession>
<proteinExistence type="inferred from homology"/>
<dbReference type="EMBL" id="CP000259">
    <property type="protein sequence ID" value="ABF31242.1"/>
    <property type="molecule type" value="Genomic_DNA"/>
</dbReference>
<dbReference type="RefSeq" id="WP_000615920.1">
    <property type="nucleotide sequence ID" value="NC_008021.1"/>
</dbReference>
<dbReference type="SMR" id="Q1JP07"/>
<dbReference type="GeneID" id="83689563"/>
<dbReference type="KEGG" id="spk:MGAS9429_Spy0054"/>
<dbReference type="HOGENOM" id="CLU_095071_2_1_9"/>
<dbReference type="Proteomes" id="UP000002433">
    <property type="component" value="Chromosome"/>
</dbReference>
<dbReference type="GO" id="GO:0022625">
    <property type="term" value="C:cytosolic large ribosomal subunit"/>
    <property type="evidence" value="ECO:0007669"/>
    <property type="project" value="TreeGrafter"/>
</dbReference>
<dbReference type="GO" id="GO:0070180">
    <property type="term" value="F:large ribosomal subunit rRNA binding"/>
    <property type="evidence" value="ECO:0007669"/>
    <property type="project" value="TreeGrafter"/>
</dbReference>
<dbReference type="GO" id="GO:0003735">
    <property type="term" value="F:structural constituent of ribosome"/>
    <property type="evidence" value="ECO:0007669"/>
    <property type="project" value="InterPro"/>
</dbReference>
<dbReference type="GO" id="GO:0006412">
    <property type="term" value="P:translation"/>
    <property type="evidence" value="ECO:0007669"/>
    <property type="project" value="UniProtKB-UniRule"/>
</dbReference>
<dbReference type="CDD" id="cd00337">
    <property type="entry name" value="Ribosomal_uL14"/>
    <property type="match status" value="1"/>
</dbReference>
<dbReference type="FunFam" id="2.40.150.20:FF:000001">
    <property type="entry name" value="50S ribosomal protein L14"/>
    <property type="match status" value="1"/>
</dbReference>
<dbReference type="Gene3D" id="2.40.150.20">
    <property type="entry name" value="Ribosomal protein L14"/>
    <property type="match status" value="1"/>
</dbReference>
<dbReference type="HAMAP" id="MF_01367">
    <property type="entry name" value="Ribosomal_uL14"/>
    <property type="match status" value="1"/>
</dbReference>
<dbReference type="InterPro" id="IPR000218">
    <property type="entry name" value="Ribosomal_uL14"/>
</dbReference>
<dbReference type="InterPro" id="IPR005745">
    <property type="entry name" value="Ribosomal_uL14_bac-type"/>
</dbReference>
<dbReference type="InterPro" id="IPR019972">
    <property type="entry name" value="Ribosomal_uL14_CS"/>
</dbReference>
<dbReference type="InterPro" id="IPR036853">
    <property type="entry name" value="Ribosomal_uL14_sf"/>
</dbReference>
<dbReference type="NCBIfam" id="TIGR01067">
    <property type="entry name" value="rplN_bact"/>
    <property type="match status" value="1"/>
</dbReference>
<dbReference type="PANTHER" id="PTHR11761">
    <property type="entry name" value="50S/60S RIBOSOMAL PROTEIN L14/L23"/>
    <property type="match status" value="1"/>
</dbReference>
<dbReference type="PANTHER" id="PTHR11761:SF3">
    <property type="entry name" value="LARGE RIBOSOMAL SUBUNIT PROTEIN UL14M"/>
    <property type="match status" value="1"/>
</dbReference>
<dbReference type="Pfam" id="PF00238">
    <property type="entry name" value="Ribosomal_L14"/>
    <property type="match status" value="1"/>
</dbReference>
<dbReference type="SMART" id="SM01374">
    <property type="entry name" value="Ribosomal_L14"/>
    <property type="match status" value="1"/>
</dbReference>
<dbReference type="SUPFAM" id="SSF50193">
    <property type="entry name" value="Ribosomal protein L14"/>
    <property type="match status" value="1"/>
</dbReference>
<dbReference type="PROSITE" id="PS00049">
    <property type="entry name" value="RIBOSOMAL_L14"/>
    <property type="match status" value="1"/>
</dbReference>
<evidence type="ECO:0000255" key="1">
    <source>
        <dbReference type="HAMAP-Rule" id="MF_01367"/>
    </source>
</evidence>
<evidence type="ECO:0000305" key="2"/>
<feature type="chain" id="PRO_1000055720" description="Large ribosomal subunit protein uL14">
    <location>
        <begin position="1"/>
        <end position="122"/>
    </location>
</feature>
<organism>
    <name type="scientific">Streptococcus pyogenes serotype M12 (strain MGAS9429)</name>
    <dbReference type="NCBI Taxonomy" id="370551"/>
    <lineage>
        <taxon>Bacteria</taxon>
        <taxon>Bacillati</taxon>
        <taxon>Bacillota</taxon>
        <taxon>Bacilli</taxon>
        <taxon>Lactobacillales</taxon>
        <taxon>Streptococcaceae</taxon>
        <taxon>Streptococcus</taxon>
    </lineage>
</organism>
<sequence>MIQQETRLKVADNSGAREILTIKVLGGSGRKFANIGDVIVASVKQATPGGAVKKGDVVKAVIVRTKTGARRPDGSYIKFDDNAAVIIRDDKTPRGTRIFGPVARELREGGYMKIVSLAPEVL</sequence>
<reference key="1">
    <citation type="journal article" date="2006" name="Proc. Natl. Acad. Sci. U.S.A.">
        <title>Molecular genetic anatomy of inter- and intraserotype variation in the human bacterial pathogen group A Streptococcus.</title>
        <authorList>
            <person name="Beres S.B."/>
            <person name="Richter E.W."/>
            <person name="Nagiec M.J."/>
            <person name="Sumby P."/>
            <person name="Porcella S.F."/>
            <person name="DeLeo F.R."/>
            <person name="Musser J.M."/>
        </authorList>
    </citation>
    <scope>NUCLEOTIDE SEQUENCE [LARGE SCALE GENOMIC DNA]</scope>
    <source>
        <strain>MGAS9429</strain>
    </source>
</reference>
<protein>
    <recommendedName>
        <fullName evidence="1">Large ribosomal subunit protein uL14</fullName>
    </recommendedName>
    <alternativeName>
        <fullName evidence="2">50S ribosomal protein L14</fullName>
    </alternativeName>
</protein>